<accession>Q04KB0</accession>
<proteinExistence type="inferred from homology"/>
<sequence>MEKYLSVTTLTKYLKMKFDKDPYLERVYLTGQVSNFRKRPTHQYFSLKDDHAVIQATIWSGIYQKLGFDLEEGMKINVIGRVQVYEPSGSYSIIIEKVEPDGVGALAIQFEQLKKKLTEEGLFQERFKQALPQFSKRIGVVTSRSGAVIRDIITTVSRRFPGVDILLYPTKVQGEGAAEEIARNIARANQRDDLDLLIIGRGGGSIEDLWAFNEEIVVRAIFESRLPVISSVGHETDVTLADFVADRRAATPTAAAELATPVTKLDVLAHLQNQEKRMVTAVRNVLSKKQEALKKCSQSVIFRQPERLYDGYLQRLDQLQLRLKQSLRTRISDNKQLVQARTHQLVQLSPVTKIQRYQDRLGQLDKLLGSQMALVYDAKVAEAKRLSEALLMLDTSRIVARGYAIVKKEESVVDSVESLKKKDQVTLLMRDGQVELEVKDVKTKEI</sequence>
<reference key="1">
    <citation type="journal article" date="2007" name="J. Bacteriol.">
        <title>Genome sequence of Avery's virulent serotype 2 strain D39 of Streptococcus pneumoniae and comparison with that of unencapsulated laboratory strain R6.</title>
        <authorList>
            <person name="Lanie J.A."/>
            <person name="Ng W.-L."/>
            <person name="Kazmierczak K.M."/>
            <person name="Andrzejewski T.M."/>
            <person name="Davidsen T.M."/>
            <person name="Wayne K.J."/>
            <person name="Tettelin H."/>
            <person name="Glass J.I."/>
            <person name="Winkler M.E."/>
        </authorList>
    </citation>
    <scope>NUCLEOTIDE SEQUENCE [LARGE SCALE GENOMIC DNA]</scope>
    <source>
        <strain>D39 / NCTC 7466</strain>
    </source>
</reference>
<feature type="chain" id="PRO_0000303821" description="Exodeoxyribonuclease 7 large subunit">
    <location>
        <begin position="1"/>
        <end position="446"/>
    </location>
</feature>
<organism>
    <name type="scientific">Streptococcus pneumoniae serotype 2 (strain D39 / NCTC 7466)</name>
    <dbReference type="NCBI Taxonomy" id="373153"/>
    <lineage>
        <taxon>Bacteria</taxon>
        <taxon>Bacillati</taxon>
        <taxon>Bacillota</taxon>
        <taxon>Bacilli</taxon>
        <taxon>Lactobacillales</taxon>
        <taxon>Streptococcaceae</taxon>
        <taxon>Streptococcus</taxon>
    </lineage>
</organism>
<gene>
    <name evidence="1" type="primary">xseA</name>
    <name type="ordered locus">SPD_1067</name>
</gene>
<keyword id="KW-0963">Cytoplasm</keyword>
<keyword id="KW-0269">Exonuclease</keyword>
<keyword id="KW-0378">Hydrolase</keyword>
<keyword id="KW-0540">Nuclease</keyword>
<keyword id="KW-1185">Reference proteome</keyword>
<evidence type="ECO:0000255" key="1">
    <source>
        <dbReference type="HAMAP-Rule" id="MF_00378"/>
    </source>
</evidence>
<comment type="function">
    <text evidence="1">Bidirectionally degrades single-stranded DNA into large acid-insoluble oligonucleotides, which are then degraded further into small acid-soluble oligonucleotides.</text>
</comment>
<comment type="catalytic activity">
    <reaction evidence="1">
        <text>Exonucleolytic cleavage in either 5'- to 3'- or 3'- to 5'-direction to yield nucleoside 5'-phosphates.</text>
        <dbReference type="EC" id="3.1.11.6"/>
    </reaction>
</comment>
<comment type="subunit">
    <text evidence="1">Heterooligomer composed of large and small subunits.</text>
</comment>
<comment type="subcellular location">
    <subcellularLocation>
        <location evidence="1">Cytoplasm</location>
    </subcellularLocation>
</comment>
<comment type="similarity">
    <text evidence="1">Belongs to the XseA family.</text>
</comment>
<protein>
    <recommendedName>
        <fullName evidence="1">Exodeoxyribonuclease 7 large subunit</fullName>
        <ecNumber evidence="1">3.1.11.6</ecNumber>
    </recommendedName>
    <alternativeName>
        <fullName evidence="1">Exodeoxyribonuclease VII large subunit</fullName>
        <shortName evidence="1">Exonuclease VII large subunit</shortName>
    </alternativeName>
</protein>
<name>EX7L_STRP2</name>
<dbReference type="EC" id="3.1.11.6" evidence="1"/>
<dbReference type="EMBL" id="CP000410">
    <property type="protein sequence ID" value="ABJ53756.1"/>
    <property type="molecule type" value="Genomic_DNA"/>
</dbReference>
<dbReference type="RefSeq" id="WP_000417487.1">
    <property type="nucleotide sequence ID" value="NZ_JAMLJR010000006.1"/>
</dbReference>
<dbReference type="SMR" id="Q04KB0"/>
<dbReference type="PaxDb" id="373153-SPD_1067"/>
<dbReference type="KEGG" id="spd:SPD_1067"/>
<dbReference type="eggNOG" id="COG1570">
    <property type="taxonomic scope" value="Bacteria"/>
</dbReference>
<dbReference type="HOGENOM" id="CLU_023625_3_1_9"/>
<dbReference type="BioCyc" id="SPNE373153:G1G6V-1157-MONOMER"/>
<dbReference type="Proteomes" id="UP000001452">
    <property type="component" value="Chromosome"/>
</dbReference>
<dbReference type="GO" id="GO:0005737">
    <property type="term" value="C:cytoplasm"/>
    <property type="evidence" value="ECO:0007669"/>
    <property type="project" value="UniProtKB-SubCell"/>
</dbReference>
<dbReference type="GO" id="GO:0009318">
    <property type="term" value="C:exodeoxyribonuclease VII complex"/>
    <property type="evidence" value="ECO:0007669"/>
    <property type="project" value="InterPro"/>
</dbReference>
<dbReference type="GO" id="GO:0008855">
    <property type="term" value="F:exodeoxyribonuclease VII activity"/>
    <property type="evidence" value="ECO:0007669"/>
    <property type="project" value="UniProtKB-UniRule"/>
</dbReference>
<dbReference type="GO" id="GO:0003676">
    <property type="term" value="F:nucleic acid binding"/>
    <property type="evidence" value="ECO:0007669"/>
    <property type="project" value="InterPro"/>
</dbReference>
<dbReference type="GO" id="GO:0006308">
    <property type="term" value="P:DNA catabolic process"/>
    <property type="evidence" value="ECO:0007669"/>
    <property type="project" value="UniProtKB-UniRule"/>
</dbReference>
<dbReference type="CDD" id="cd04489">
    <property type="entry name" value="ExoVII_LU_OBF"/>
    <property type="match status" value="1"/>
</dbReference>
<dbReference type="HAMAP" id="MF_00378">
    <property type="entry name" value="Exonuc_7_L"/>
    <property type="match status" value="1"/>
</dbReference>
<dbReference type="InterPro" id="IPR003753">
    <property type="entry name" value="Exonuc_VII_L"/>
</dbReference>
<dbReference type="InterPro" id="IPR020579">
    <property type="entry name" value="Exonuc_VII_lsu_C"/>
</dbReference>
<dbReference type="InterPro" id="IPR025824">
    <property type="entry name" value="OB-fold_nuc-bd_dom"/>
</dbReference>
<dbReference type="NCBIfam" id="TIGR00237">
    <property type="entry name" value="xseA"/>
    <property type="match status" value="1"/>
</dbReference>
<dbReference type="PANTHER" id="PTHR30008">
    <property type="entry name" value="EXODEOXYRIBONUCLEASE 7 LARGE SUBUNIT"/>
    <property type="match status" value="1"/>
</dbReference>
<dbReference type="PANTHER" id="PTHR30008:SF0">
    <property type="entry name" value="EXODEOXYRIBONUCLEASE 7 LARGE SUBUNIT"/>
    <property type="match status" value="1"/>
</dbReference>
<dbReference type="Pfam" id="PF02601">
    <property type="entry name" value="Exonuc_VII_L"/>
    <property type="match status" value="1"/>
</dbReference>
<dbReference type="Pfam" id="PF13742">
    <property type="entry name" value="tRNA_anti_2"/>
    <property type="match status" value="1"/>
</dbReference>